<comment type="function">
    <text evidence="1">Lectin involved in the quality control of the secretory pathway. As a member of the endoplasmic reticulum-associated degradation lumenal (ERAD-L) surveillance system, targets misfolded endoplasmic reticulum lumenal glycoproteins for degradation (By similarity).</text>
</comment>
<comment type="subunit">
    <text evidence="1">Interacts with missfolded ER lumenal proteins.</text>
</comment>
<comment type="subcellular location">
    <subcellularLocation>
        <location evidence="1">Endoplasmic reticulum membrane</location>
        <topology evidence="1">Peripheral membrane protein</topology>
        <orientation evidence="1">Lumenal side</orientation>
    </subcellularLocation>
</comment>
<comment type="similarity">
    <text evidence="6">Belongs to the OS-9 family.</text>
</comment>
<proteinExistence type="inferred from homology"/>
<reference key="1">
    <citation type="journal article" date="2004" name="Nature">
        <title>Genome evolution in yeasts.</title>
        <authorList>
            <person name="Dujon B."/>
            <person name="Sherman D."/>
            <person name="Fischer G."/>
            <person name="Durrens P."/>
            <person name="Casaregola S."/>
            <person name="Lafontaine I."/>
            <person name="de Montigny J."/>
            <person name="Marck C."/>
            <person name="Neuveglise C."/>
            <person name="Talla E."/>
            <person name="Goffard N."/>
            <person name="Frangeul L."/>
            <person name="Aigle M."/>
            <person name="Anthouard V."/>
            <person name="Babour A."/>
            <person name="Barbe V."/>
            <person name="Barnay S."/>
            <person name="Blanchin S."/>
            <person name="Beckerich J.-M."/>
            <person name="Beyne E."/>
            <person name="Bleykasten C."/>
            <person name="Boisrame A."/>
            <person name="Boyer J."/>
            <person name="Cattolico L."/>
            <person name="Confanioleri F."/>
            <person name="de Daruvar A."/>
            <person name="Despons L."/>
            <person name="Fabre E."/>
            <person name="Fairhead C."/>
            <person name="Ferry-Dumazet H."/>
            <person name="Groppi A."/>
            <person name="Hantraye F."/>
            <person name="Hennequin C."/>
            <person name="Jauniaux N."/>
            <person name="Joyet P."/>
            <person name="Kachouri R."/>
            <person name="Kerrest A."/>
            <person name="Koszul R."/>
            <person name="Lemaire M."/>
            <person name="Lesur I."/>
            <person name="Ma L."/>
            <person name="Muller H."/>
            <person name="Nicaud J.-M."/>
            <person name="Nikolski M."/>
            <person name="Oztas S."/>
            <person name="Ozier-Kalogeropoulos O."/>
            <person name="Pellenz S."/>
            <person name="Potier S."/>
            <person name="Richard G.-F."/>
            <person name="Straub M.-L."/>
            <person name="Suleau A."/>
            <person name="Swennen D."/>
            <person name="Tekaia F."/>
            <person name="Wesolowski-Louvel M."/>
            <person name="Westhof E."/>
            <person name="Wirth B."/>
            <person name="Zeniou-Meyer M."/>
            <person name="Zivanovic Y."/>
            <person name="Bolotin-Fukuhara M."/>
            <person name="Thierry A."/>
            <person name="Bouchier C."/>
            <person name="Caudron B."/>
            <person name="Scarpelli C."/>
            <person name="Gaillardin C."/>
            <person name="Weissenbach J."/>
            <person name="Wincker P."/>
            <person name="Souciet J.-L."/>
        </authorList>
    </citation>
    <scope>NUCLEOTIDE SEQUENCE [LARGE SCALE GENOMIC DNA]</scope>
    <source>
        <strain>ATCC 2001 / BCRC 20586 / JCM 3761 / NBRC 0622 / NRRL Y-65 / CBS 138</strain>
    </source>
</reference>
<name>OS9_CANGA</name>
<evidence type="ECO:0000250" key="1"/>
<evidence type="ECO:0000250" key="2">
    <source>
        <dbReference type="UniProtKB" id="Q13438"/>
    </source>
</evidence>
<evidence type="ECO:0000255" key="3"/>
<evidence type="ECO:0000255" key="4">
    <source>
        <dbReference type="PROSITE-ProRule" id="PRU01262"/>
    </source>
</evidence>
<evidence type="ECO:0000256" key="5">
    <source>
        <dbReference type="SAM" id="MobiDB-lite"/>
    </source>
</evidence>
<evidence type="ECO:0000305" key="6"/>
<organism>
    <name type="scientific">Candida glabrata (strain ATCC 2001 / BCRC 20586 / JCM 3761 / NBRC 0622 / NRRL Y-65 / CBS 138)</name>
    <name type="common">Yeast</name>
    <name type="synonym">Nakaseomyces glabratus</name>
    <dbReference type="NCBI Taxonomy" id="284593"/>
    <lineage>
        <taxon>Eukaryota</taxon>
        <taxon>Fungi</taxon>
        <taxon>Dikarya</taxon>
        <taxon>Ascomycota</taxon>
        <taxon>Saccharomycotina</taxon>
        <taxon>Saccharomycetes</taxon>
        <taxon>Saccharomycetales</taxon>
        <taxon>Saccharomycetaceae</taxon>
        <taxon>Nakaseomyces</taxon>
    </lineage>
</organism>
<sequence length="696" mass="77860">MLVVAFASLLGAARAIMMPIDDPTTSDKFQITYANESLWDTLVMKNKTALESGELFDLGPDTKCFLPNMTRLHEQNVQSVNDPEYKQKLIDTLDMGAHIIDASLKNQCLVSQNGFWTYRYCGSGDFTQYHGVAPDPNDKLTYTLGRSSKQIENREFQLLYDDYGYYISEIIESGDICDVTGTPRAIEIQYTCGNVMRPGTLQWTRETKICHYEAQVIVPDLCQLELLSKNQDKKNAVPIICHMSNDVPDKHNIVDIVSNYDVSFVANQVYFLLPMNNSNVDRALLMYTGNATEDGLEMDPFPMEIYKKFIDVMNKMLGLGLLSPPDGKPFDVHDSYQWIGDIVDMHGNYLNRLRLDVDVNMEATLIIDKSINFTGPNNFQWYFRGSDRTKNSKSRFGSLTNDNMMLAGGSIINVDDISKENAQELLEKLVAAGKLSGVIEDNKITQGSPIEASKTKVTKASESTPVSEKNKKAKTVTKTIIRSRDKEEYFKENEKQGEENNAQVPFSAHNNEQHGTISKSERKEENTNQKQLANTQKGDTDTPPQSSQSSANDKLSRSGMGQKEPGVDEIGSELRGNSKKALGSNIDNSSGRSTLNDNSDRIAVENEAREIINSNAYDQSEASVDPNYRNDQQRLNSAKEHTFSQSKEKKSINSEEILETKILNSETLGNNDGVASDVKDEEVVESDRNGVIDDEL</sequence>
<gene>
    <name type="primary">YOS9</name>
    <name type="ordered locus">CAGL0E04686g</name>
</gene>
<accession>Q6FV52</accession>
<keyword id="KW-1015">Disulfide bond</keyword>
<keyword id="KW-0256">Endoplasmic reticulum</keyword>
<keyword id="KW-0325">Glycoprotein</keyword>
<keyword id="KW-0430">Lectin</keyword>
<keyword id="KW-0472">Membrane</keyword>
<keyword id="KW-1185">Reference proteome</keyword>
<keyword id="KW-0732">Signal</keyword>
<dbReference type="EMBL" id="CR380951">
    <property type="protein sequence ID" value="CAG58811.1"/>
    <property type="molecule type" value="Genomic_DNA"/>
</dbReference>
<dbReference type="RefSeq" id="XP_445892.1">
    <property type="nucleotide sequence ID" value="XM_445892.1"/>
</dbReference>
<dbReference type="SMR" id="Q6FV52"/>
<dbReference type="FunCoup" id="Q6FV52">
    <property type="interactions" value="100"/>
</dbReference>
<dbReference type="STRING" id="284593.Q6FV52"/>
<dbReference type="GlyCosmos" id="Q6FV52">
    <property type="glycosylation" value="7 sites, No reported glycans"/>
</dbReference>
<dbReference type="EnsemblFungi" id="CAGL0E04686g-T">
    <property type="protein sequence ID" value="CAGL0E04686g-T-p1"/>
    <property type="gene ID" value="CAGL0E04686g"/>
</dbReference>
<dbReference type="KEGG" id="cgr:2887510"/>
<dbReference type="CGD" id="CAL0128972">
    <property type="gene designation" value="CAGL0E04686g"/>
</dbReference>
<dbReference type="VEuPathDB" id="FungiDB:CAGL0E04686g"/>
<dbReference type="eggNOG" id="KOG3394">
    <property type="taxonomic scope" value="Eukaryota"/>
</dbReference>
<dbReference type="HOGENOM" id="CLU_395859_0_0_1"/>
<dbReference type="InParanoid" id="Q6FV52"/>
<dbReference type="OMA" id="RETKICH"/>
<dbReference type="Proteomes" id="UP000002428">
    <property type="component" value="Chromosome E"/>
</dbReference>
<dbReference type="GO" id="GO:0005788">
    <property type="term" value="C:endoplasmic reticulum lumen"/>
    <property type="evidence" value="ECO:0007669"/>
    <property type="project" value="TreeGrafter"/>
</dbReference>
<dbReference type="GO" id="GO:0005789">
    <property type="term" value="C:endoplasmic reticulum membrane"/>
    <property type="evidence" value="ECO:0007669"/>
    <property type="project" value="UniProtKB-SubCell"/>
</dbReference>
<dbReference type="GO" id="GO:0030246">
    <property type="term" value="F:carbohydrate binding"/>
    <property type="evidence" value="ECO:0007669"/>
    <property type="project" value="UniProtKB-KW"/>
</dbReference>
<dbReference type="GO" id="GO:0030968">
    <property type="term" value="P:endoplasmic reticulum unfolded protein response"/>
    <property type="evidence" value="ECO:0007669"/>
    <property type="project" value="InterPro"/>
</dbReference>
<dbReference type="GO" id="GO:0030970">
    <property type="term" value="P:retrograde protein transport, ER to cytosol"/>
    <property type="evidence" value="ECO:0007669"/>
    <property type="project" value="TreeGrafter"/>
</dbReference>
<dbReference type="CDD" id="cd11745">
    <property type="entry name" value="Yos9_DD"/>
    <property type="match status" value="1"/>
</dbReference>
<dbReference type="Gene3D" id="3.10.310.60">
    <property type="match status" value="1"/>
</dbReference>
<dbReference type="Gene3D" id="2.70.130.10">
    <property type="entry name" value="Mannose-6-phosphate receptor binding domain"/>
    <property type="match status" value="1"/>
</dbReference>
<dbReference type="InterPro" id="IPR009011">
    <property type="entry name" value="Man6P_isomerase_rcpt-bd_dom_sf"/>
</dbReference>
<dbReference type="InterPro" id="IPR044865">
    <property type="entry name" value="MRH_dom"/>
</dbReference>
<dbReference type="InterPro" id="IPR045149">
    <property type="entry name" value="OS-9-like"/>
</dbReference>
<dbReference type="InterPro" id="IPR012913">
    <property type="entry name" value="OS9-like_dom"/>
</dbReference>
<dbReference type="InterPro" id="IPR041039">
    <property type="entry name" value="Yos9_DD"/>
</dbReference>
<dbReference type="PANTHER" id="PTHR15414:SF0">
    <property type="entry name" value="ENDOPLASMIC RETICULUM LECTIN 1"/>
    <property type="match status" value="1"/>
</dbReference>
<dbReference type="PANTHER" id="PTHR15414">
    <property type="entry name" value="OS-9-RELATED"/>
    <property type="match status" value="1"/>
</dbReference>
<dbReference type="Pfam" id="PF07915">
    <property type="entry name" value="PRKCSH"/>
    <property type="match status" value="1"/>
</dbReference>
<dbReference type="Pfam" id="PF17880">
    <property type="entry name" value="Yos9_DD"/>
    <property type="match status" value="1"/>
</dbReference>
<dbReference type="PROSITE" id="PS51914">
    <property type="entry name" value="MRH"/>
    <property type="match status" value="1"/>
</dbReference>
<feature type="signal peptide" evidence="3">
    <location>
        <begin position="1"/>
        <end position="15"/>
    </location>
</feature>
<feature type="chain" id="PRO_0000043268" description="Protein OS-9 homolog">
    <location>
        <begin position="16"/>
        <end position="696"/>
    </location>
</feature>
<feature type="domain" description="MRH" evidence="4">
    <location>
        <begin position="106"/>
        <end position="224"/>
    </location>
</feature>
<feature type="region of interest" description="Disordered" evidence="5">
    <location>
        <begin position="450"/>
        <end position="600"/>
    </location>
</feature>
<feature type="region of interest" description="Disordered" evidence="5">
    <location>
        <begin position="667"/>
        <end position="696"/>
    </location>
</feature>
<feature type="compositionally biased region" description="Polar residues" evidence="5">
    <location>
        <begin position="458"/>
        <end position="467"/>
    </location>
</feature>
<feature type="compositionally biased region" description="Basic and acidic residues" evidence="5">
    <location>
        <begin position="482"/>
        <end position="498"/>
    </location>
</feature>
<feature type="compositionally biased region" description="Polar residues" evidence="5">
    <location>
        <begin position="499"/>
        <end position="518"/>
    </location>
</feature>
<feature type="compositionally biased region" description="Polar residues" evidence="5">
    <location>
        <begin position="528"/>
        <end position="553"/>
    </location>
</feature>
<feature type="compositionally biased region" description="Polar residues" evidence="5">
    <location>
        <begin position="585"/>
        <end position="597"/>
    </location>
</feature>
<feature type="compositionally biased region" description="Basic and acidic residues" evidence="5">
    <location>
        <begin position="685"/>
        <end position="696"/>
    </location>
</feature>
<feature type="binding site" evidence="2">
    <location>
        <position position="116"/>
    </location>
    <ligand>
        <name>a mannooligosaccharide derivative</name>
        <dbReference type="ChEBI" id="CHEBI:71274"/>
    </ligand>
</feature>
<feature type="binding site" evidence="2">
    <location>
        <position position="128"/>
    </location>
    <ligand>
        <name>a mannooligosaccharide derivative</name>
        <dbReference type="ChEBI" id="CHEBI:71274"/>
    </ligand>
</feature>
<feature type="binding site" evidence="2">
    <location>
        <position position="178"/>
    </location>
    <ligand>
        <name>a mannooligosaccharide derivative</name>
        <dbReference type="ChEBI" id="CHEBI:71274"/>
    </ligand>
</feature>
<feature type="binding site" evidence="2">
    <location>
        <position position="184"/>
    </location>
    <ligand>
        <name>a mannooligosaccharide derivative</name>
        <dbReference type="ChEBI" id="CHEBI:71274"/>
    </ligand>
</feature>
<feature type="binding site" evidence="2">
    <location>
        <position position="206"/>
    </location>
    <ligand>
        <name>a mannooligosaccharide derivative</name>
        <dbReference type="ChEBI" id="CHEBI:71274"/>
    </ligand>
</feature>
<feature type="binding site" evidence="2">
    <location>
        <position position="212"/>
    </location>
    <ligand>
        <name>a mannooligosaccharide derivative</name>
        <dbReference type="ChEBI" id="CHEBI:71274"/>
    </ligand>
</feature>
<feature type="glycosylation site" description="N-linked (GlcNAc...) asparagine" evidence="3">
    <location>
        <position position="35"/>
    </location>
</feature>
<feature type="glycosylation site" description="N-linked (GlcNAc...) asparagine" evidence="3">
    <location>
        <position position="46"/>
    </location>
</feature>
<feature type="glycosylation site" description="N-linked (GlcNAc...) asparagine" evidence="3">
    <location>
        <position position="68"/>
    </location>
</feature>
<feature type="glycosylation site" description="N-linked (GlcNAc...) asparagine" evidence="3">
    <location>
        <position position="276"/>
    </location>
</feature>
<feature type="glycosylation site" description="N-linked (GlcNAc...) asparagine" evidence="3">
    <location>
        <position position="290"/>
    </location>
</feature>
<feature type="glycosylation site" description="N-linked (GlcNAc...) asparagine" evidence="3">
    <location>
        <position position="372"/>
    </location>
</feature>
<feature type="glycosylation site" description="N-linked (GlcNAc...) asparagine" evidence="3">
    <location>
        <position position="588"/>
    </location>
</feature>
<feature type="disulfide bond" evidence="4">
    <location>
        <begin position="108"/>
        <end position="121"/>
    </location>
</feature>
<feature type="disulfide bond" evidence="4">
    <location>
        <begin position="177"/>
        <end position="210"/>
    </location>
</feature>
<feature type="disulfide bond" evidence="4">
    <location>
        <begin position="192"/>
        <end position="222"/>
    </location>
</feature>
<protein>
    <recommendedName>
        <fullName>Protein OS-9 homolog</fullName>
    </recommendedName>
</protein>